<gene>
    <name evidence="1" type="primary">atpF</name>
    <name type="synonym">atpB</name>
    <name type="ordered locus">SP_1512</name>
</gene>
<accession>P0A2Z2</accession>
<accession>Q59952</accession>
<accession>Q59955</accession>
<evidence type="ECO:0000255" key="1">
    <source>
        <dbReference type="HAMAP-Rule" id="MF_01398"/>
    </source>
</evidence>
<evidence type="ECO:0000305" key="2"/>
<sequence>MHVTVGELIGNFILITGSFILLLVLIKKFAWSNITGIFEERAEKIASDIDRAEEARQKAEVLAQKREDELAGSRKEAKTIIENAKETAEQSKANILADAKLEAGHLKEKANQEIAQNKVEALQSVKGEVADLTISLAGKIISQNLDSHAHKALIDQYIDQLGEA</sequence>
<comment type="function">
    <text evidence="1">F(1)F(0) ATP synthase produces ATP from ADP in the presence of a proton or sodium gradient. F-type ATPases consist of two structural domains, F(1) containing the extramembraneous catalytic core and F(0) containing the membrane proton channel, linked together by a central stalk and a peripheral stalk. During catalysis, ATP synthesis in the catalytic domain of F(1) is coupled via a rotary mechanism of the central stalk subunits to proton translocation.</text>
</comment>
<comment type="function">
    <text evidence="1">Component of the F(0) channel, it forms part of the peripheral stalk, linking F(1) to F(0).</text>
</comment>
<comment type="subunit">
    <text evidence="1">F-type ATPases have 2 components, F(1) - the catalytic core - and F(0) - the membrane proton channel. F(1) has five subunits: alpha(3), beta(3), gamma(1), delta(1), epsilon(1). F(0) has three main subunits: a(1), b(2) and c(10-14). The alpha and beta chains form an alternating ring which encloses part of the gamma chain. F(1) is attached to F(0) by a central stalk formed by the gamma and epsilon chains, while a peripheral stalk is formed by the delta and b chains.</text>
</comment>
<comment type="subcellular location">
    <subcellularLocation>
        <location evidence="1">Cell membrane</location>
        <topology evidence="1">Single-pass membrane protein</topology>
    </subcellularLocation>
</comment>
<comment type="similarity">
    <text evidence="1">Belongs to the ATPase B chain family.</text>
</comment>
<proteinExistence type="inferred from homology"/>
<feature type="chain" id="PRO_0000082389" description="ATP synthase subunit b">
    <location>
        <begin position="1"/>
        <end position="164"/>
    </location>
</feature>
<feature type="transmembrane region" description="Helical" evidence="1">
    <location>
        <begin position="6"/>
        <end position="26"/>
    </location>
</feature>
<feature type="sequence conflict" description="In Ref. 1; CAA81449." evidence="2" ref="1">
    <original>L</original>
    <variation>V</variation>
    <location>
        <position position="101"/>
    </location>
</feature>
<feature type="sequence conflict" description="In Ref. 1; CAA81449." evidence="2" ref="1">
    <original>H</original>
    <variation>R</variation>
    <location>
        <position position="105"/>
    </location>
</feature>
<feature type="sequence conflict" description="In Ref. 1; CAA81449." evidence="2" ref="1">
    <original>V</original>
    <variation>A</variation>
    <location>
        <position position="119"/>
    </location>
</feature>
<feature type="sequence conflict" description="In Ref. 1; CAA81449." evidence="2" ref="1">
    <original>I</original>
    <variation>V</variation>
    <location>
        <position position="134"/>
    </location>
</feature>
<feature type="sequence conflict" description="In Ref. 1; CAA81449." evidence="2" ref="1">
    <original>Q</original>
    <variation>K</variation>
    <location>
        <position position="143"/>
    </location>
</feature>
<feature type="sequence conflict" description="In Ref. 1; CAA81449." evidence="2" ref="1">
    <original>A</original>
    <variation>E</variation>
    <location>
        <position position="152"/>
    </location>
</feature>
<protein>
    <recommendedName>
        <fullName evidence="1">ATP synthase subunit b</fullName>
    </recommendedName>
    <alternativeName>
        <fullName evidence="1">ATP synthase F(0) sector subunit b</fullName>
    </alternativeName>
    <alternativeName>
        <fullName evidence="1">ATPase subunit I</fullName>
    </alternativeName>
    <alternativeName>
        <fullName evidence="1">F-type ATPase subunit b</fullName>
        <shortName evidence="1">F-ATPase subunit b</shortName>
    </alternativeName>
</protein>
<organism>
    <name type="scientific">Streptococcus pneumoniae serotype 4 (strain ATCC BAA-334 / TIGR4)</name>
    <dbReference type="NCBI Taxonomy" id="170187"/>
    <lineage>
        <taxon>Bacteria</taxon>
        <taxon>Bacillati</taxon>
        <taxon>Bacillota</taxon>
        <taxon>Bacilli</taxon>
        <taxon>Lactobacillales</taxon>
        <taxon>Streptococcaceae</taxon>
        <taxon>Streptococcus</taxon>
    </lineage>
</organism>
<keyword id="KW-0066">ATP synthesis</keyword>
<keyword id="KW-1003">Cell membrane</keyword>
<keyword id="KW-0138">CF(0)</keyword>
<keyword id="KW-0375">Hydrogen ion transport</keyword>
<keyword id="KW-0406">Ion transport</keyword>
<keyword id="KW-0472">Membrane</keyword>
<keyword id="KW-1185">Reference proteome</keyword>
<keyword id="KW-0812">Transmembrane</keyword>
<keyword id="KW-1133">Transmembrane helix</keyword>
<keyword id="KW-0813">Transport</keyword>
<reference key="1">
    <citation type="journal article" date="1994" name="Mol. Microbiol.">
        <title>Molecular basis of the optochin-sensitive phenotype of pneumococcus: characterization of the genes encoding the F0 complex of the Streptococcus pneumoniae and Streptococcus oralis H(+)-ATPases.</title>
        <authorList>
            <person name="Fenoll A."/>
            <person name="Munoz R."/>
            <person name="Garcia E."/>
            <person name="de la Campa A.G."/>
        </authorList>
    </citation>
    <scope>NUCLEOTIDE SEQUENCE [GENOMIC DNA]</scope>
    <source>
        <strain>M222</strain>
    </source>
</reference>
<reference key="2">
    <citation type="journal article" date="2001" name="Science">
        <title>Complete genome sequence of a virulent isolate of Streptococcus pneumoniae.</title>
        <authorList>
            <person name="Tettelin H."/>
            <person name="Nelson K.E."/>
            <person name="Paulsen I.T."/>
            <person name="Eisen J.A."/>
            <person name="Read T.D."/>
            <person name="Peterson S.N."/>
            <person name="Heidelberg J.F."/>
            <person name="DeBoy R.T."/>
            <person name="Haft D.H."/>
            <person name="Dodson R.J."/>
            <person name="Durkin A.S."/>
            <person name="Gwinn M.L."/>
            <person name="Kolonay J.F."/>
            <person name="Nelson W.C."/>
            <person name="Peterson J.D."/>
            <person name="Umayam L.A."/>
            <person name="White O."/>
            <person name="Salzberg S.L."/>
            <person name="Lewis M.R."/>
            <person name="Radune D."/>
            <person name="Holtzapple E.K."/>
            <person name="Khouri H.M."/>
            <person name="Wolf A.M."/>
            <person name="Utterback T.R."/>
            <person name="Hansen C.L."/>
            <person name="McDonald L.A."/>
            <person name="Feldblyum T.V."/>
            <person name="Angiuoli S.V."/>
            <person name="Dickinson T."/>
            <person name="Hickey E.K."/>
            <person name="Holt I.E."/>
            <person name="Loftus B.J."/>
            <person name="Yang F."/>
            <person name="Smith H.O."/>
            <person name="Venter J.C."/>
            <person name="Dougherty B.A."/>
            <person name="Morrison D.A."/>
            <person name="Hollingshead S.K."/>
            <person name="Fraser C.M."/>
        </authorList>
    </citation>
    <scope>NUCLEOTIDE SEQUENCE [LARGE SCALE GENOMIC DNA]</scope>
    <source>
        <strain>ATCC BAA-334 / TIGR4</strain>
    </source>
</reference>
<name>ATPF_STRPN</name>
<dbReference type="EMBL" id="Z26850">
    <property type="protein sequence ID" value="CAA81449.1"/>
    <property type="molecule type" value="Genomic_DNA"/>
</dbReference>
<dbReference type="EMBL" id="AE005672">
    <property type="protein sequence ID" value="AAK75603.1"/>
    <property type="molecule type" value="Genomic_DNA"/>
</dbReference>
<dbReference type="PIR" id="B95176">
    <property type="entry name" value="B95176"/>
</dbReference>
<dbReference type="PIR" id="S49401">
    <property type="entry name" value="S49401"/>
</dbReference>
<dbReference type="RefSeq" id="WP_000558554.1">
    <property type="nucleotide sequence ID" value="NZ_CP155539.1"/>
</dbReference>
<dbReference type="SMR" id="P0A2Z2"/>
<dbReference type="PaxDb" id="170187-SP_1512"/>
<dbReference type="EnsemblBacteria" id="AAK75603">
    <property type="protein sequence ID" value="AAK75603"/>
    <property type="gene ID" value="SP_1512"/>
</dbReference>
<dbReference type="GeneID" id="45653249"/>
<dbReference type="KEGG" id="spn:SP_1512"/>
<dbReference type="eggNOG" id="COG0711">
    <property type="taxonomic scope" value="Bacteria"/>
</dbReference>
<dbReference type="PhylomeDB" id="P0A2Z2"/>
<dbReference type="BioCyc" id="SPNE170187:G1FZB-1528-MONOMER"/>
<dbReference type="Proteomes" id="UP000000585">
    <property type="component" value="Chromosome"/>
</dbReference>
<dbReference type="GO" id="GO:0005886">
    <property type="term" value="C:plasma membrane"/>
    <property type="evidence" value="ECO:0007669"/>
    <property type="project" value="UniProtKB-SubCell"/>
</dbReference>
<dbReference type="GO" id="GO:0045259">
    <property type="term" value="C:proton-transporting ATP synthase complex"/>
    <property type="evidence" value="ECO:0007669"/>
    <property type="project" value="UniProtKB-KW"/>
</dbReference>
<dbReference type="GO" id="GO:0046933">
    <property type="term" value="F:proton-transporting ATP synthase activity, rotational mechanism"/>
    <property type="evidence" value="ECO:0007669"/>
    <property type="project" value="UniProtKB-UniRule"/>
</dbReference>
<dbReference type="GO" id="GO:0046961">
    <property type="term" value="F:proton-transporting ATPase activity, rotational mechanism"/>
    <property type="evidence" value="ECO:0007669"/>
    <property type="project" value="TreeGrafter"/>
</dbReference>
<dbReference type="CDD" id="cd06503">
    <property type="entry name" value="ATP-synt_Fo_b"/>
    <property type="match status" value="1"/>
</dbReference>
<dbReference type="Gene3D" id="6.10.250.1580">
    <property type="match status" value="1"/>
</dbReference>
<dbReference type="HAMAP" id="MF_01398">
    <property type="entry name" value="ATP_synth_b_bprime"/>
    <property type="match status" value="1"/>
</dbReference>
<dbReference type="InterPro" id="IPR028987">
    <property type="entry name" value="ATP_synth_B-like_membr_sf"/>
</dbReference>
<dbReference type="InterPro" id="IPR002146">
    <property type="entry name" value="ATP_synth_b/b'su_bac/chlpt"/>
</dbReference>
<dbReference type="InterPro" id="IPR005864">
    <property type="entry name" value="ATP_synth_F0_bsu_bac"/>
</dbReference>
<dbReference type="InterPro" id="IPR050059">
    <property type="entry name" value="ATP_synthase_B_chain"/>
</dbReference>
<dbReference type="NCBIfam" id="TIGR01144">
    <property type="entry name" value="ATP_synt_b"/>
    <property type="match status" value="1"/>
</dbReference>
<dbReference type="PANTHER" id="PTHR33445:SF1">
    <property type="entry name" value="ATP SYNTHASE SUBUNIT B"/>
    <property type="match status" value="1"/>
</dbReference>
<dbReference type="PANTHER" id="PTHR33445">
    <property type="entry name" value="ATP SYNTHASE SUBUNIT B', CHLOROPLASTIC"/>
    <property type="match status" value="1"/>
</dbReference>
<dbReference type="Pfam" id="PF00430">
    <property type="entry name" value="ATP-synt_B"/>
    <property type="match status" value="1"/>
</dbReference>
<dbReference type="SUPFAM" id="SSF81573">
    <property type="entry name" value="F1F0 ATP synthase subunit B, membrane domain"/>
    <property type="match status" value="1"/>
</dbReference>